<name>RPOZ_SHESH</name>
<organism>
    <name type="scientific">Shewanella sediminis (strain HAW-EB3)</name>
    <dbReference type="NCBI Taxonomy" id="425104"/>
    <lineage>
        <taxon>Bacteria</taxon>
        <taxon>Pseudomonadati</taxon>
        <taxon>Pseudomonadota</taxon>
        <taxon>Gammaproteobacteria</taxon>
        <taxon>Alteromonadales</taxon>
        <taxon>Shewanellaceae</taxon>
        <taxon>Shewanella</taxon>
    </lineage>
</organism>
<comment type="function">
    <text evidence="1">Promotes RNA polymerase assembly. Latches the N- and C-terminal regions of the beta' subunit thereby facilitating its interaction with the beta and alpha subunits.</text>
</comment>
<comment type="catalytic activity">
    <reaction evidence="1">
        <text>RNA(n) + a ribonucleoside 5'-triphosphate = RNA(n+1) + diphosphate</text>
        <dbReference type="Rhea" id="RHEA:21248"/>
        <dbReference type="Rhea" id="RHEA-COMP:14527"/>
        <dbReference type="Rhea" id="RHEA-COMP:17342"/>
        <dbReference type="ChEBI" id="CHEBI:33019"/>
        <dbReference type="ChEBI" id="CHEBI:61557"/>
        <dbReference type="ChEBI" id="CHEBI:140395"/>
        <dbReference type="EC" id="2.7.7.6"/>
    </reaction>
</comment>
<comment type="subunit">
    <text evidence="1">The RNAP catalytic core consists of 2 alpha, 1 beta, 1 beta' and 1 omega subunit. When a sigma factor is associated with the core the holoenzyme is formed, which can initiate transcription.</text>
</comment>
<comment type="similarity">
    <text evidence="1">Belongs to the RNA polymerase subunit omega family.</text>
</comment>
<reference key="1">
    <citation type="submission" date="2007-08" db="EMBL/GenBank/DDBJ databases">
        <title>Complete sequence of Shewanella sediminis HAW-EB3.</title>
        <authorList>
            <consortium name="US DOE Joint Genome Institute"/>
            <person name="Copeland A."/>
            <person name="Lucas S."/>
            <person name="Lapidus A."/>
            <person name="Barry K."/>
            <person name="Glavina del Rio T."/>
            <person name="Dalin E."/>
            <person name="Tice H."/>
            <person name="Pitluck S."/>
            <person name="Chertkov O."/>
            <person name="Brettin T."/>
            <person name="Bruce D."/>
            <person name="Detter J.C."/>
            <person name="Han C."/>
            <person name="Schmutz J."/>
            <person name="Larimer F."/>
            <person name="Land M."/>
            <person name="Hauser L."/>
            <person name="Kyrpides N."/>
            <person name="Kim E."/>
            <person name="Zhao J.-S."/>
            <person name="Richardson P."/>
        </authorList>
    </citation>
    <scope>NUCLEOTIDE SEQUENCE [LARGE SCALE GENOMIC DNA]</scope>
    <source>
        <strain>HAW-EB3</strain>
    </source>
</reference>
<evidence type="ECO:0000255" key="1">
    <source>
        <dbReference type="HAMAP-Rule" id="MF_00366"/>
    </source>
</evidence>
<sequence length="94" mass="10313">MARVTVEDAVNQIGNRFDMILVAARRARQIAVQGKDPMVEEENDKPTVIALREIELGLVTADTLDADERQTVREREAAEIAAVAAIAEGRNNVI</sequence>
<keyword id="KW-0240">DNA-directed RNA polymerase</keyword>
<keyword id="KW-0548">Nucleotidyltransferase</keyword>
<keyword id="KW-1185">Reference proteome</keyword>
<keyword id="KW-0804">Transcription</keyword>
<keyword id="KW-0808">Transferase</keyword>
<gene>
    <name evidence="1" type="primary">rpoZ</name>
    <name type="ordered locus">Ssed_0335</name>
</gene>
<feature type="chain" id="PRO_1000079649" description="DNA-directed RNA polymerase subunit omega">
    <location>
        <begin position="1"/>
        <end position="94"/>
    </location>
</feature>
<proteinExistence type="inferred from homology"/>
<dbReference type="EC" id="2.7.7.6" evidence="1"/>
<dbReference type="EMBL" id="CP000821">
    <property type="protein sequence ID" value="ABV34948.1"/>
    <property type="molecule type" value="Genomic_DNA"/>
</dbReference>
<dbReference type="RefSeq" id="WP_012004474.1">
    <property type="nucleotide sequence ID" value="NC_009831.1"/>
</dbReference>
<dbReference type="SMR" id="A8FQ25"/>
<dbReference type="STRING" id="425104.Ssed_0335"/>
<dbReference type="KEGG" id="sse:Ssed_0335"/>
<dbReference type="eggNOG" id="COG1758">
    <property type="taxonomic scope" value="Bacteria"/>
</dbReference>
<dbReference type="HOGENOM" id="CLU_125406_5_3_6"/>
<dbReference type="OrthoDB" id="9796300at2"/>
<dbReference type="Proteomes" id="UP000002015">
    <property type="component" value="Chromosome"/>
</dbReference>
<dbReference type="GO" id="GO:0000428">
    <property type="term" value="C:DNA-directed RNA polymerase complex"/>
    <property type="evidence" value="ECO:0007669"/>
    <property type="project" value="UniProtKB-KW"/>
</dbReference>
<dbReference type="GO" id="GO:0003677">
    <property type="term" value="F:DNA binding"/>
    <property type="evidence" value="ECO:0007669"/>
    <property type="project" value="UniProtKB-UniRule"/>
</dbReference>
<dbReference type="GO" id="GO:0003899">
    <property type="term" value="F:DNA-directed RNA polymerase activity"/>
    <property type="evidence" value="ECO:0007669"/>
    <property type="project" value="UniProtKB-UniRule"/>
</dbReference>
<dbReference type="GO" id="GO:0006351">
    <property type="term" value="P:DNA-templated transcription"/>
    <property type="evidence" value="ECO:0007669"/>
    <property type="project" value="UniProtKB-UniRule"/>
</dbReference>
<dbReference type="Gene3D" id="3.90.940.10">
    <property type="match status" value="1"/>
</dbReference>
<dbReference type="HAMAP" id="MF_00366">
    <property type="entry name" value="RNApol_bact_RpoZ"/>
    <property type="match status" value="1"/>
</dbReference>
<dbReference type="InterPro" id="IPR003716">
    <property type="entry name" value="DNA-dir_RNA_pol_omega"/>
</dbReference>
<dbReference type="InterPro" id="IPR006110">
    <property type="entry name" value="Pol_omega/Rpo6/RPB6"/>
</dbReference>
<dbReference type="InterPro" id="IPR036161">
    <property type="entry name" value="RPB6/omega-like_sf"/>
</dbReference>
<dbReference type="NCBIfam" id="TIGR00690">
    <property type="entry name" value="rpoZ"/>
    <property type="match status" value="1"/>
</dbReference>
<dbReference type="PANTHER" id="PTHR34476">
    <property type="entry name" value="DNA-DIRECTED RNA POLYMERASE SUBUNIT OMEGA"/>
    <property type="match status" value="1"/>
</dbReference>
<dbReference type="PANTHER" id="PTHR34476:SF1">
    <property type="entry name" value="DNA-DIRECTED RNA POLYMERASE SUBUNIT OMEGA"/>
    <property type="match status" value="1"/>
</dbReference>
<dbReference type="Pfam" id="PF01192">
    <property type="entry name" value="RNA_pol_Rpb6"/>
    <property type="match status" value="1"/>
</dbReference>
<dbReference type="SMART" id="SM01409">
    <property type="entry name" value="RNA_pol_Rpb6"/>
    <property type="match status" value="1"/>
</dbReference>
<dbReference type="SUPFAM" id="SSF63562">
    <property type="entry name" value="RPB6/omega subunit-like"/>
    <property type="match status" value="1"/>
</dbReference>
<protein>
    <recommendedName>
        <fullName evidence="1">DNA-directed RNA polymerase subunit omega</fullName>
        <shortName evidence="1">RNAP omega subunit</shortName>
        <ecNumber evidence="1">2.7.7.6</ecNumber>
    </recommendedName>
    <alternativeName>
        <fullName evidence="1">RNA polymerase omega subunit</fullName>
    </alternativeName>
    <alternativeName>
        <fullName evidence="1">Transcriptase subunit omega</fullName>
    </alternativeName>
</protein>
<accession>A8FQ25</accession>